<accession>Q053E2</accession>
<comment type="function">
    <text evidence="1">Catalyzes the interconversion of methylthioribose-1-phosphate (MTR-1-P) into methylthioribulose-1-phosphate (MTRu-1-P).</text>
</comment>
<comment type="catalytic activity">
    <reaction evidence="1">
        <text>5-(methylsulfanyl)-alpha-D-ribose 1-phosphate = 5-(methylsulfanyl)-D-ribulose 1-phosphate</text>
        <dbReference type="Rhea" id="RHEA:19989"/>
        <dbReference type="ChEBI" id="CHEBI:58533"/>
        <dbReference type="ChEBI" id="CHEBI:58548"/>
        <dbReference type="EC" id="5.3.1.23"/>
    </reaction>
</comment>
<comment type="pathway">
    <text evidence="1">Amino-acid biosynthesis; L-methionine biosynthesis via salvage pathway; L-methionine from S-methyl-5-thio-alpha-D-ribose 1-phosphate: step 1/6.</text>
</comment>
<comment type="similarity">
    <text evidence="2">Belongs to the eIF-2B alpha/beta/delta subunits family. MtnA subfamily.</text>
</comment>
<dbReference type="EC" id="5.3.1.23" evidence="1"/>
<dbReference type="EMBL" id="CP000348">
    <property type="protein sequence ID" value="ABJ78553.1"/>
    <property type="molecule type" value="Genomic_DNA"/>
</dbReference>
<dbReference type="RefSeq" id="WP_011669829.1">
    <property type="nucleotide sequence ID" value="NC_008508.1"/>
</dbReference>
<dbReference type="SMR" id="Q053E2"/>
<dbReference type="GeneID" id="61173658"/>
<dbReference type="KEGG" id="lbl:LBL_1024"/>
<dbReference type="PATRIC" id="fig|355276.3.peg.1305"/>
<dbReference type="HOGENOM" id="CLU_016218_1_2_12"/>
<dbReference type="UniPathway" id="UPA00904">
    <property type="reaction ID" value="UER00874"/>
</dbReference>
<dbReference type="GO" id="GO:0046523">
    <property type="term" value="F:S-methyl-5-thioribose-1-phosphate isomerase activity"/>
    <property type="evidence" value="ECO:0007669"/>
    <property type="project" value="UniProtKB-UniRule"/>
</dbReference>
<dbReference type="GO" id="GO:0019509">
    <property type="term" value="P:L-methionine salvage from methylthioadenosine"/>
    <property type="evidence" value="ECO:0007669"/>
    <property type="project" value="UniProtKB-UniRule"/>
</dbReference>
<dbReference type="FunFam" id="1.20.120.420:FF:000003">
    <property type="entry name" value="Methylthioribose-1-phosphate isomerase"/>
    <property type="match status" value="1"/>
</dbReference>
<dbReference type="FunFam" id="3.40.50.10470:FF:000006">
    <property type="entry name" value="Methylthioribose-1-phosphate isomerase"/>
    <property type="match status" value="1"/>
</dbReference>
<dbReference type="Gene3D" id="1.20.120.420">
    <property type="entry name" value="translation initiation factor eif-2b, domain 1"/>
    <property type="match status" value="1"/>
</dbReference>
<dbReference type="Gene3D" id="3.40.50.10470">
    <property type="entry name" value="Translation initiation factor eif-2b, domain 2"/>
    <property type="match status" value="1"/>
</dbReference>
<dbReference type="HAMAP" id="MF_01678">
    <property type="entry name" value="Salvage_MtnA"/>
    <property type="match status" value="1"/>
</dbReference>
<dbReference type="InterPro" id="IPR000649">
    <property type="entry name" value="IF-2B-related"/>
</dbReference>
<dbReference type="InterPro" id="IPR005251">
    <property type="entry name" value="IF-M1Pi"/>
</dbReference>
<dbReference type="InterPro" id="IPR042529">
    <property type="entry name" value="IF_2B-like_C"/>
</dbReference>
<dbReference type="InterPro" id="IPR011559">
    <property type="entry name" value="Initiation_fac_2B_a/b/d"/>
</dbReference>
<dbReference type="InterPro" id="IPR027363">
    <property type="entry name" value="M1Pi_N"/>
</dbReference>
<dbReference type="InterPro" id="IPR037171">
    <property type="entry name" value="NagB/RpiA_transferase-like"/>
</dbReference>
<dbReference type="NCBIfam" id="TIGR00524">
    <property type="entry name" value="eIF-2B_rel"/>
    <property type="match status" value="1"/>
</dbReference>
<dbReference type="NCBIfam" id="NF004326">
    <property type="entry name" value="PRK05720.1"/>
    <property type="match status" value="1"/>
</dbReference>
<dbReference type="NCBIfam" id="TIGR00512">
    <property type="entry name" value="salvage_mtnA"/>
    <property type="match status" value="1"/>
</dbReference>
<dbReference type="PANTHER" id="PTHR43475">
    <property type="entry name" value="METHYLTHIORIBOSE-1-PHOSPHATE ISOMERASE"/>
    <property type="match status" value="1"/>
</dbReference>
<dbReference type="PANTHER" id="PTHR43475:SF1">
    <property type="entry name" value="METHYLTHIORIBOSE-1-PHOSPHATE ISOMERASE"/>
    <property type="match status" value="1"/>
</dbReference>
<dbReference type="Pfam" id="PF01008">
    <property type="entry name" value="IF-2B"/>
    <property type="match status" value="1"/>
</dbReference>
<dbReference type="SUPFAM" id="SSF100950">
    <property type="entry name" value="NagB/RpiA/CoA transferase-like"/>
    <property type="match status" value="1"/>
</dbReference>
<gene>
    <name evidence="1" type="primary">mtnA</name>
    <name type="ordered locus">LBL_1024</name>
</gene>
<evidence type="ECO:0000255" key="1">
    <source>
        <dbReference type="HAMAP-Rule" id="MF_01678"/>
    </source>
</evidence>
<evidence type="ECO:0000305" key="2"/>
<reference key="1">
    <citation type="journal article" date="2006" name="Proc. Natl. Acad. Sci. U.S.A.">
        <title>Genome reduction in Leptospira borgpetersenii reflects limited transmission potential.</title>
        <authorList>
            <person name="Bulach D.M."/>
            <person name="Zuerner R.L."/>
            <person name="Wilson P."/>
            <person name="Seemann T."/>
            <person name="McGrath A."/>
            <person name="Cullen P.A."/>
            <person name="Davis J."/>
            <person name="Johnson M."/>
            <person name="Kuczek E."/>
            <person name="Alt D.P."/>
            <person name="Peterson-Burch B."/>
            <person name="Coppel R.L."/>
            <person name="Rood J.I."/>
            <person name="Davies J.K."/>
            <person name="Adler B."/>
        </authorList>
    </citation>
    <scope>NUCLEOTIDE SEQUENCE [LARGE SCALE GENOMIC DNA]</scope>
    <source>
        <strain>L550</strain>
    </source>
</reference>
<protein>
    <recommendedName>
        <fullName evidence="1">Methylthioribose-1-phosphate isomerase</fullName>
        <shortName evidence="1">M1Pi</shortName>
        <shortName evidence="1">MTR-1-P isomerase</shortName>
        <ecNumber evidence="1">5.3.1.23</ecNumber>
    </recommendedName>
    <alternativeName>
        <fullName evidence="1">S-methyl-5-thioribose-1-phosphate isomerase</fullName>
    </alternativeName>
</protein>
<proteinExistence type="inferred from homology"/>
<organism>
    <name type="scientific">Leptospira borgpetersenii serovar Hardjo-bovis (strain L550)</name>
    <dbReference type="NCBI Taxonomy" id="355276"/>
    <lineage>
        <taxon>Bacteria</taxon>
        <taxon>Pseudomonadati</taxon>
        <taxon>Spirochaetota</taxon>
        <taxon>Spirochaetia</taxon>
        <taxon>Leptospirales</taxon>
        <taxon>Leptospiraceae</taxon>
        <taxon>Leptospira</taxon>
    </lineage>
</organism>
<feature type="chain" id="PRO_0000357201" description="Methylthioribose-1-phosphate isomerase">
    <location>
        <begin position="1"/>
        <end position="362"/>
    </location>
</feature>
<feature type="active site" description="Proton donor" evidence="1">
    <location>
        <position position="242"/>
    </location>
</feature>
<feature type="binding site" evidence="1">
    <location>
        <begin position="49"/>
        <end position="51"/>
    </location>
    <ligand>
        <name>substrate</name>
    </ligand>
</feature>
<feature type="binding site" evidence="1">
    <location>
        <position position="89"/>
    </location>
    <ligand>
        <name>substrate</name>
    </ligand>
</feature>
<feature type="binding site" evidence="1">
    <location>
        <position position="201"/>
    </location>
    <ligand>
        <name>substrate</name>
    </ligand>
</feature>
<feature type="binding site" evidence="1">
    <location>
        <begin position="252"/>
        <end position="253"/>
    </location>
    <ligand>
        <name>substrate</name>
    </ligand>
</feature>
<feature type="site" description="Transition state stabilizer" evidence="1">
    <location>
        <position position="162"/>
    </location>
</feature>
<name>MTNA_LEPBL</name>
<sequence>MQESGLKPILWTNKELILLDQRVLPGTTSYLKAKTLEDCIFAIREMVVRGAPAIAITGAFGIALYLNGLSSQPTFSQLKTKLDELLESRPTAVNLRLVIEEFFSRFPEADYSSANLEKMQKSAEEFALFMLEEDLENNLTLSKNALSLFPKSPSSLNIITHCNTGALATAGHGTALGVIRSLRDAGHSLTVFADETRPYLQGARLTAWELKEEGIPSYLITDNMAGWVMSSRKIHAVIVGADRIASNGDTANKIGTYPLAIIAKHHGVPFYVAATSKSMDFRIPDGSHIPIEMRKENEVTSFGFLKDATGKPLLNEGVLAPNGIKALNPSFDVTPASLISGIITERGIISPVTEENLRKTFS</sequence>
<keyword id="KW-0028">Amino-acid biosynthesis</keyword>
<keyword id="KW-0413">Isomerase</keyword>
<keyword id="KW-0486">Methionine biosynthesis</keyword>